<keyword id="KW-0342">GTP-binding</keyword>
<keyword id="KW-0378">Hydrolase</keyword>
<keyword id="KW-0479">Metal-binding</keyword>
<keyword id="KW-0547">Nucleotide-binding</keyword>
<keyword id="KW-0686">Riboflavin biosynthesis</keyword>
<keyword id="KW-0862">Zinc</keyword>
<name>RIBA_SHESR</name>
<sequence length="203" mass="22835">MSIKYVATSKLPTPWGVFAMHGFEDTETGKEHVALTFGTLNSDAPVLGRIHSECLTGDALFSLRCDCGFQLQTAMQNIAETGSGFILYLRQEGRGIGLLNKIRAYELQDKGANTVEANEQLGFPADMRKYDMIQPMLEQIGVKHVRLMTNNPRKVKAMKEIGIEVVERVPLQVGKNRYNEAYLKTKSTELGHMMSEYHFTDEE</sequence>
<accession>Q0HTR2</accession>
<gene>
    <name evidence="1" type="primary">ribA</name>
    <name type="ordered locus">Shewmr7_2508</name>
</gene>
<feature type="chain" id="PRO_1000040587" description="GTP cyclohydrolase-2">
    <location>
        <begin position="1"/>
        <end position="203"/>
    </location>
</feature>
<feature type="active site" description="Proton acceptor" evidence="1">
    <location>
        <position position="126"/>
    </location>
</feature>
<feature type="active site" description="Nucleophile" evidence="1">
    <location>
        <position position="128"/>
    </location>
</feature>
<feature type="binding site" evidence="1">
    <location>
        <begin position="49"/>
        <end position="53"/>
    </location>
    <ligand>
        <name>GTP</name>
        <dbReference type="ChEBI" id="CHEBI:37565"/>
    </ligand>
</feature>
<feature type="binding site" evidence="1">
    <location>
        <position position="54"/>
    </location>
    <ligand>
        <name>Zn(2+)</name>
        <dbReference type="ChEBI" id="CHEBI:29105"/>
        <note>catalytic</note>
    </ligand>
</feature>
<feature type="binding site" evidence="1">
    <location>
        <position position="65"/>
    </location>
    <ligand>
        <name>Zn(2+)</name>
        <dbReference type="ChEBI" id="CHEBI:29105"/>
        <note>catalytic</note>
    </ligand>
</feature>
<feature type="binding site" evidence="1">
    <location>
        <position position="67"/>
    </location>
    <ligand>
        <name>Zn(2+)</name>
        <dbReference type="ChEBI" id="CHEBI:29105"/>
        <note>catalytic</note>
    </ligand>
</feature>
<feature type="binding site" evidence="1">
    <location>
        <position position="70"/>
    </location>
    <ligand>
        <name>GTP</name>
        <dbReference type="ChEBI" id="CHEBI:37565"/>
    </ligand>
</feature>
<feature type="binding site" evidence="1">
    <location>
        <begin position="92"/>
        <end position="94"/>
    </location>
    <ligand>
        <name>GTP</name>
        <dbReference type="ChEBI" id="CHEBI:37565"/>
    </ligand>
</feature>
<feature type="binding site" evidence="1">
    <location>
        <position position="114"/>
    </location>
    <ligand>
        <name>GTP</name>
        <dbReference type="ChEBI" id="CHEBI:37565"/>
    </ligand>
</feature>
<feature type="binding site" evidence="1">
    <location>
        <position position="149"/>
    </location>
    <ligand>
        <name>GTP</name>
        <dbReference type="ChEBI" id="CHEBI:37565"/>
    </ligand>
</feature>
<feature type="binding site" evidence="1">
    <location>
        <position position="154"/>
    </location>
    <ligand>
        <name>GTP</name>
        <dbReference type="ChEBI" id="CHEBI:37565"/>
    </ligand>
</feature>
<evidence type="ECO:0000255" key="1">
    <source>
        <dbReference type="HAMAP-Rule" id="MF_00179"/>
    </source>
</evidence>
<dbReference type="EC" id="3.5.4.25" evidence="1"/>
<dbReference type="EMBL" id="CP000444">
    <property type="protein sequence ID" value="ABI43493.1"/>
    <property type="molecule type" value="Genomic_DNA"/>
</dbReference>
<dbReference type="SMR" id="Q0HTR2"/>
<dbReference type="KEGG" id="shm:Shewmr7_2508"/>
<dbReference type="HOGENOM" id="CLU_020273_2_1_6"/>
<dbReference type="UniPathway" id="UPA00275">
    <property type="reaction ID" value="UER00400"/>
</dbReference>
<dbReference type="GO" id="GO:0005829">
    <property type="term" value="C:cytosol"/>
    <property type="evidence" value="ECO:0007669"/>
    <property type="project" value="TreeGrafter"/>
</dbReference>
<dbReference type="GO" id="GO:0005525">
    <property type="term" value="F:GTP binding"/>
    <property type="evidence" value="ECO:0007669"/>
    <property type="project" value="UniProtKB-KW"/>
</dbReference>
<dbReference type="GO" id="GO:0003935">
    <property type="term" value="F:GTP cyclohydrolase II activity"/>
    <property type="evidence" value="ECO:0007669"/>
    <property type="project" value="UniProtKB-UniRule"/>
</dbReference>
<dbReference type="GO" id="GO:0008270">
    <property type="term" value="F:zinc ion binding"/>
    <property type="evidence" value="ECO:0007669"/>
    <property type="project" value="UniProtKB-UniRule"/>
</dbReference>
<dbReference type="GO" id="GO:0009231">
    <property type="term" value="P:riboflavin biosynthetic process"/>
    <property type="evidence" value="ECO:0007669"/>
    <property type="project" value="UniProtKB-UniRule"/>
</dbReference>
<dbReference type="CDD" id="cd00641">
    <property type="entry name" value="GTP_cyclohydro2"/>
    <property type="match status" value="1"/>
</dbReference>
<dbReference type="FunFam" id="3.40.50.10990:FF:000002">
    <property type="entry name" value="GTP cyclohydrolase-2"/>
    <property type="match status" value="1"/>
</dbReference>
<dbReference type="Gene3D" id="3.40.50.10990">
    <property type="entry name" value="GTP cyclohydrolase II"/>
    <property type="match status" value="1"/>
</dbReference>
<dbReference type="HAMAP" id="MF_00179">
    <property type="entry name" value="RibA"/>
    <property type="match status" value="1"/>
</dbReference>
<dbReference type="InterPro" id="IPR032677">
    <property type="entry name" value="GTP_cyclohydro_II"/>
</dbReference>
<dbReference type="InterPro" id="IPR000926">
    <property type="entry name" value="RibA"/>
</dbReference>
<dbReference type="InterPro" id="IPR036144">
    <property type="entry name" value="RibA-like_sf"/>
</dbReference>
<dbReference type="NCBIfam" id="NF001591">
    <property type="entry name" value="PRK00393.1"/>
    <property type="match status" value="1"/>
</dbReference>
<dbReference type="NCBIfam" id="TIGR00505">
    <property type="entry name" value="ribA"/>
    <property type="match status" value="1"/>
</dbReference>
<dbReference type="PANTHER" id="PTHR21327:SF18">
    <property type="entry name" value="3,4-DIHYDROXY-2-BUTANONE 4-PHOSPHATE SYNTHASE"/>
    <property type="match status" value="1"/>
</dbReference>
<dbReference type="PANTHER" id="PTHR21327">
    <property type="entry name" value="GTP CYCLOHYDROLASE II-RELATED"/>
    <property type="match status" value="1"/>
</dbReference>
<dbReference type="Pfam" id="PF00925">
    <property type="entry name" value="GTP_cyclohydro2"/>
    <property type="match status" value="1"/>
</dbReference>
<dbReference type="SUPFAM" id="SSF142695">
    <property type="entry name" value="RibA-like"/>
    <property type="match status" value="1"/>
</dbReference>
<protein>
    <recommendedName>
        <fullName evidence="1">GTP cyclohydrolase-2</fullName>
        <ecNumber evidence="1">3.5.4.25</ecNumber>
    </recommendedName>
    <alternativeName>
        <fullName evidence="1">GTP cyclohydrolase II</fullName>
    </alternativeName>
</protein>
<proteinExistence type="inferred from homology"/>
<reference key="1">
    <citation type="submission" date="2006-08" db="EMBL/GenBank/DDBJ databases">
        <title>Complete sequence of chromosome 1 of Shewanella sp. MR-7.</title>
        <authorList>
            <person name="Copeland A."/>
            <person name="Lucas S."/>
            <person name="Lapidus A."/>
            <person name="Barry K."/>
            <person name="Detter J.C."/>
            <person name="Glavina del Rio T."/>
            <person name="Hammon N."/>
            <person name="Israni S."/>
            <person name="Dalin E."/>
            <person name="Tice H."/>
            <person name="Pitluck S."/>
            <person name="Kiss H."/>
            <person name="Brettin T."/>
            <person name="Bruce D."/>
            <person name="Han C."/>
            <person name="Tapia R."/>
            <person name="Gilna P."/>
            <person name="Schmutz J."/>
            <person name="Larimer F."/>
            <person name="Land M."/>
            <person name="Hauser L."/>
            <person name="Kyrpides N."/>
            <person name="Mikhailova N."/>
            <person name="Nealson K."/>
            <person name="Konstantinidis K."/>
            <person name="Klappenbach J."/>
            <person name="Tiedje J."/>
            <person name="Richardson P."/>
        </authorList>
    </citation>
    <scope>NUCLEOTIDE SEQUENCE [LARGE SCALE GENOMIC DNA]</scope>
    <source>
        <strain>MR-7</strain>
    </source>
</reference>
<comment type="function">
    <text evidence="1">Catalyzes the conversion of GTP to 2,5-diamino-6-ribosylamino-4(3H)-pyrimidinone 5'-phosphate (DARP), formate and pyrophosphate.</text>
</comment>
<comment type="catalytic activity">
    <reaction evidence="1">
        <text>GTP + 4 H2O = 2,5-diamino-6-hydroxy-4-(5-phosphoribosylamino)-pyrimidine + formate + 2 phosphate + 3 H(+)</text>
        <dbReference type="Rhea" id="RHEA:23704"/>
        <dbReference type="ChEBI" id="CHEBI:15377"/>
        <dbReference type="ChEBI" id="CHEBI:15378"/>
        <dbReference type="ChEBI" id="CHEBI:15740"/>
        <dbReference type="ChEBI" id="CHEBI:37565"/>
        <dbReference type="ChEBI" id="CHEBI:43474"/>
        <dbReference type="ChEBI" id="CHEBI:58614"/>
        <dbReference type="EC" id="3.5.4.25"/>
    </reaction>
</comment>
<comment type="cofactor">
    <cofactor evidence="1">
        <name>Zn(2+)</name>
        <dbReference type="ChEBI" id="CHEBI:29105"/>
    </cofactor>
    <text evidence="1">Binds 1 zinc ion per subunit.</text>
</comment>
<comment type="pathway">
    <text evidence="1">Cofactor biosynthesis; riboflavin biosynthesis; 5-amino-6-(D-ribitylamino)uracil from GTP: step 1/4.</text>
</comment>
<comment type="similarity">
    <text evidence="1">Belongs to the GTP cyclohydrolase II family.</text>
</comment>
<organism>
    <name type="scientific">Shewanella sp. (strain MR-7)</name>
    <dbReference type="NCBI Taxonomy" id="60481"/>
    <lineage>
        <taxon>Bacteria</taxon>
        <taxon>Pseudomonadati</taxon>
        <taxon>Pseudomonadota</taxon>
        <taxon>Gammaproteobacteria</taxon>
        <taxon>Alteromonadales</taxon>
        <taxon>Shewanellaceae</taxon>
        <taxon>Shewanella</taxon>
    </lineage>
</organism>